<dbReference type="EC" id="6.3.1.20" evidence="1"/>
<dbReference type="EMBL" id="CP001233">
    <property type="protein sequence ID" value="ACP05659.1"/>
    <property type="molecule type" value="Genomic_DNA"/>
</dbReference>
<dbReference type="RefSeq" id="WP_000169395.1">
    <property type="nucleotide sequence ID" value="NC_012578.1"/>
</dbReference>
<dbReference type="SMR" id="C3LM83"/>
<dbReference type="KEGG" id="vcm:VCM66_1343"/>
<dbReference type="HOGENOM" id="CLU_022986_0_1_6"/>
<dbReference type="UniPathway" id="UPA00537">
    <property type="reaction ID" value="UER00594"/>
</dbReference>
<dbReference type="UniPathway" id="UPA00537">
    <property type="reaction ID" value="UER00595"/>
</dbReference>
<dbReference type="Proteomes" id="UP000001217">
    <property type="component" value="Chromosome I"/>
</dbReference>
<dbReference type="GO" id="GO:0005829">
    <property type="term" value="C:cytosol"/>
    <property type="evidence" value="ECO:0007669"/>
    <property type="project" value="TreeGrafter"/>
</dbReference>
<dbReference type="GO" id="GO:0005524">
    <property type="term" value="F:ATP binding"/>
    <property type="evidence" value="ECO:0007669"/>
    <property type="project" value="UniProtKB-KW"/>
</dbReference>
<dbReference type="GO" id="GO:0016979">
    <property type="term" value="F:lipoate-protein ligase activity"/>
    <property type="evidence" value="ECO:0007669"/>
    <property type="project" value="UniProtKB-UniRule"/>
</dbReference>
<dbReference type="GO" id="GO:0017118">
    <property type="term" value="F:lipoyltransferase activity"/>
    <property type="evidence" value="ECO:0007669"/>
    <property type="project" value="TreeGrafter"/>
</dbReference>
<dbReference type="GO" id="GO:0036211">
    <property type="term" value="P:protein modification process"/>
    <property type="evidence" value="ECO:0007669"/>
    <property type="project" value="InterPro"/>
</dbReference>
<dbReference type="CDD" id="cd16443">
    <property type="entry name" value="LplA"/>
    <property type="match status" value="1"/>
</dbReference>
<dbReference type="FunFam" id="3.30.930.10:FF:000024">
    <property type="entry name" value="Lipoate-protein ligase A"/>
    <property type="match status" value="1"/>
</dbReference>
<dbReference type="Gene3D" id="3.30.930.10">
    <property type="entry name" value="Bira Bifunctional Protein, Domain 2"/>
    <property type="match status" value="1"/>
</dbReference>
<dbReference type="Gene3D" id="3.30.390.50">
    <property type="entry name" value="CO dehydrogenase flavoprotein, C-terminal domain"/>
    <property type="match status" value="1"/>
</dbReference>
<dbReference type="HAMAP" id="MF_01602">
    <property type="entry name" value="LplA"/>
    <property type="match status" value="1"/>
</dbReference>
<dbReference type="InterPro" id="IPR045864">
    <property type="entry name" value="aa-tRNA-synth_II/BPL/LPL"/>
</dbReference>
<dbReference type="InterPro" id="IPR004143">
    <property type="entry name" value="BPL_LPL_catalytic"/>
</dbReference>
<dbReference type="InterPro" id="IPR023741">
    <property type="entry name" value="Lipoate_ligase_A"/>
</dbReference>
<dbReference type="InterPro" id="IPR019491">
    <property type="entry name" value="Lipoate_protein_ligase_C"/>
</dbReference>
<dbReference type="InterPro" id="IPR004562">
    <property type="entry name" value="LipoylTrfase_LipoateP_Ligase"/>
</dbReference>
<dbReference type="NCBIfam" id="TIGR00545">
    <property type="entry name" value="lipoyltrans"/>
    <property type="match status" value="1"/>
</dbReference>
<dbReference type="PANTHER" id="PTHR12561">
    <property type="entry name" value="LIPOATE-PROTEIN LIGASE"/>
    <property type="match status" value="1"/>
</dbReference>
<dbReference type="PANTHER" id="PTHR12561:SF3">
    <property type="entry name" value="LIPOYLTRANSFERASE 1, MITOCHONDRIAL"/>
    <property type="match status" value="1"/>
</dbReference>
<dbReference type="Pfam" id="PF10437">
    <property type="entry name" value="Lip_prot_lig_C"/>
    <property type="match status" value="1"/>
</dbReference>
<dbReference type="Pfam" id="PF21948">
    <property type="entry name" value="LplA-B_cat"/>
    <property type="match status" value="1"/>
</dbReference>
<dbReference type="SUPFAM" id="SSF55681">
    <property type="entry name" value="Class II aaRS and biotin synthetases"/>
    <property type="match status" value="1"/>
</dbReference>
<dbReference type="SUPFAM" id="SSF82649">
    <property type="entry name" value="SufE/NifU"/>
    <property type="match status" value="1"/>
</dbReference>
<dbReference type="PROSITE" id="PS51733">
    <property type="entry name" value="BPL_LPL_CATALYTIC"/>
    <property type="match status" value="1"/>
</dbReference>
<gene>
    <name evidence="1" type="primary">lplA</name>
    <name type="ordered locus">VCM66_1343</name>
</gene>
<protein>
    <recommendedName>
        <fullName evidence="1">Lipoate-protein ligase A</fullName>
        <ecNumber evidence="1">6.3.1.20</ecNumber>
    </recommendedName>
    <alternativeName>
        <fullName evidence="1">Lipoate--protein ligase</fullName>
    </alternativeName>
</protein>
<proteinExistence type="inferred from homology"/>
<sequence>MTKTRILLSDSTDPWFNLAVEDTIFRSMPADQRVLFLWRNADTVVIGRAQNPWRECKTDRMEQDKVKLARRQTGGGAVFHDLGNTNFTFMAGKPEYDKEVSTKIVLAGLQKLGIHGVANGRNDLVLEDEQGIRKFSGSAYRETLDRGFHHGTLLLSADLNRLADYLNPDLKKLQAKGITSVKSRVINLNTVKADIEHQQVCEAIMQAYCEHYQQQVEPELISPQSFFDLPGFEQKFAQQSSWDWNFGQTPPFTHHMDERFSWGGVEVYLEVERGTIVQATIFSDMLDPYPMEQLALRLSGLTYNKTALEPCLAQLMQELPQYQLPLEEFQRWFIDQID</sequence>
<accession>C3LM83</accession>
<name>LPLA_VIBCM</name>
<organism>
    <name type="scientific">Vibrio cholerae serotype O1 (strain M66-2)</name>
    <dbReference type="NCBI Taxonomy" id="579112"/>
    <lineage>
        <taxon>Bacteria</taxon>
        <taxon>Pseudomonadati</taxon>
        <taxon>Pseudomonadota</taxon>
        <taxon>Gammaproteobacteria</taxon>
        <taxon>Vibrionales</taxon>
        <taxon>Vibrionaceae</taxon>
        <taxon>Vibrio</taxon>
    </lineage>
</organism>
<reference key="1">
    <citation type="journal article" date="2008" name="PLoS ONE">
        <title>A recalibrated molecular clock and independent origins for the cholera pandemic clones.</title>
        <authorList>
            <person name="Feng L."/>
            <person name="Reeves P.R."/>
            <person name="Lan R."/>
            <person name="Ren Y."/>
            <person name="Gao C."/>
            <person name="Zhou Z."/>
            <person name="Ren Y."/>
            <person name="Cheng J."/>
            <person name="Wang W."/>
            <person name="Wang J."/>
            <person name="Qian W."/>
            <person name="Li D."/>
            <person name="Wang L."/>
        </authorList>
    </citation>
    <scope>NUCLEOTIDE SEQUENCE [LARGE SCALE GENOMIC DNA]</scope>
    <source>
        <strain>M66-2</strain>
    </source>
</reference>
<evidence type="ECO:0000255" key="1">
    <source>
        <dbReference type="HAMAP-Rule" id="MF_01602"/>
    </source>
</evidence>
<evidence type="ECO:0000255" key="2">
    <source>
        <dbReference type="PROSITE-ProRule" id="PRU01067"/>
    </source>
</evidence>
<keyword id="KW-0067">ATP-binding</keyword>
<keyword id="KW-0963">Cytoplasm</keyword>
<keyword id="KW-0436">Ligase</keyword>
<keyword id="KW-0547">Nucleotide-binding</keyword>
<feature type="chain" id="PRO_1000185798" description="Lipoate-protein ligase A">
    <location>
        <begin position="1"/>
        <end position="338"/>
    </location>
</feature>
<feature type="domain" description="BPL/LPL catalytic" evidence="2">
    <location>
        <begin position="29"/>
        <end position="216"/>
    </location>
</feature>
<feature type="binding site" evidence="1">
    <location>
        <position position="71"/>
    </location>
    <ligand>
        <name>ATP</name>
        <dbReference type="ChEBI" id="CHEBI:30616"/>
    </ligand>
</feature>
<feature type="binding site" evidence="1">
    <location>
        <begin position="76"/>
        <end position="79"/>
    </location>
    <ligand>
        <name>ATP</name>
        <dbReference type="ChEBI" id="CHEBI:30616"/>
    </ligand>
</feature>
<feature type="binding site" evidence="1">
    <location>
        <position position="134"/>
    </location>
    <ligand>
        <name>(R)-lipoate</name>
        <dbReference type="ChEBI" id="CHEBI:83088"/>
    </ligand>
</feature>
<feature type="binding site" evidence="1">
    <location>
        <position position="134"/>
    </location>
    <ligand>
        <name>ATP</name>
        <dbReference type="ChEBI" id="CHEBI:30616"/>
    </ligand>
</feature>
<comment type="function">
    <text evidence="1">Catalyzes both the ATP-dependent activation of exogenously supplied lipoate to lipoyl-AMP and the transfer of the activated lipoyl onto the lipoyl domains of lipoate-dependent enzymes.</text>
</comment>
<comment type="catalytic activity">
    <reaction evidence="1">
        <text>L-lysyl-[lipoyl-carrier protein] + (R)-lipoate + ATP = N(6)-[(R)-lipoyl]-L-lysyl-[lipoyl-carrier protein] + AMP + diphosphate + H(+)</text>
        <dbReference type="Rhea" id="RHEA:49288"/>
        <dbReference type="Rhea" id="RHEA-COMP:10500"/>
        <dbReference type="Rhea" id="RHEA-COMP:10502"/>
        <dbReference type="ChEBI" id="CHEBI:15378"/>
        <dbReference type="ChEBI" id="CHEBI:29969"/>
        <dbReference type="ChEBI" id="CHEBI:30616"/>
        <dbReference type="ChEBI" id="CHEBI:33019"/>
        <dbReference type="ChEBI" id="CHEBI:83088"/>
        <dbReference type="ChEBI" id="CHEBI:83099"/>
        <dbReference type="ChEBI" id="CHEBI:456215"/>
        <dbReference type="EC" id="6.3.1.20"/>
    </reaction>
</comment>
<comment type="pathway">
    <text evidence="1">Protein modification; protein lipoylation via exogenous pathway; protein N(6)-(lipoyl)lysine from lipoate: step 1/2.</text>
</comment>
<comment type="pathway">
    <text evidence="1">Protein modification; protein lipoylation via exogenous pathway; protein N(6)-(lipoyl)lysine from lipoate: step 2/2.</text>
</comment>
<comment type="subunit">
    <text evidence="1">Monomer.</text>
</comment>
<comment type="subcellular location">
    <subcellularLocation>
        <location evidence="1">Cytoplasm</location>
    </subcellularLocation>
</comment>
<comment type="miscellaneous">
    <text evidence="1">In the transfer reaction, the free carboxyl group of lipoic acid is attached via an amide linkage to the epsilon-amino group of a specific lysine residue of lipoyl domains of lipoate-dependent enzymes.</text>
</comment>
<comment type="similarity">
    <text evidence="1">Belongs to the LplA family.</text>
</comment>